<dbReference type="EC" id="1.8.1.4" evidence="3"/>
<dbReference type="EMBL" id="BC062069">
    <property type="protein sequence ID" value="AAH62069.1"/>
    <property type="molecule type" value="mRNA"/>
</dbReference>
<dbReference type="RefSeq" id="NP_955417.1">
    <property type="nucleotide sequence ID" value="NM_199385.2"/>
</dbReference>
<dbReference type="RefSeq" id="XP_063117729.1">
    <property type="nucleotide sequence ID" value="XM_063261659.1"/>
</dbReference>
<dbReference type="SMR" id="Q6P6R2"/>
<dbReference type="BioGRID" id="256067">
    <property type="interactions" value="3"/>
</dbReference>
<dbReference type="FunCoup" id="Q6P6R2">
    <property type="interactions" value="2331"/>
</dbReference>
<dbReference type="IntAct" id="Q6P6R2">
    <property type="interactions" value="2"/>
</dbReference>
<dbReference type="STRING" id="10116.ENSRNOP00000008980"/>
<dbReference type="GlyGen" id="Q6P6R2">
    <property type="glycosylation" value="4 sites, 1 O-linked glycan (4 sites)"/>
</dbReference>
<dbReference type="iPTMnet" id="Q6P6R2"/>
<dbReference type="PhosphoSitePlus" id="Q6P6R2"/>
<dbReference type="SwissPalm" id="Q6P6R2"/>
<dbReference type="jPOST" id="Q6P6R2"/>
<dbReference type="PaxDb" id="10116-ENSRNOP00000008980"/>
<dbReference type="GeneID" id="298942"/>
<dbReference type="KEGG" id="rno:298942"/>
<dbReference type="UCSC" id="RGD:735073">
    <property type="organism name" value="rat"/>
</dbReference>
<dbReference type="AGR" id="RGD:735073"/>
<dbReference type="CTD" id="1738"/>
<dbReference type="RGD" id="735073">
    <property type="gene designation" value="Dld"/>
</dbReference>
<dbReference type="VEuPathDB" id="HostDB:ENSRNOG00000006364"/>
<dbReference type="eggNOG" id="KOG1335">
    <property type="taxonomic scope" value="Eukaryota"/>
</dbReference>
<dbReference type="HOGENOM" id="CLU_016755_0_1_1"/>
<dbReference type="InParanoid" id="Q6P6R2"/>
<dbReference type="OrthoDB" id="12814at9989"/>
<dbReference type="PhylomeDB" id="Q6P6R2"/>
<dbReference type="TreeFam" id="TF300414"/>
<dbReference type="Reactome" id="R-RNO-204174">
    <property type="pathway name" value="Regulation of pyruvate dehydrogenase (PDH) complex"/>
</dbReference>
<dbReference type="Reactome" id="R-RNO-5362517">
    <property type="pathway name" value="Signaling by Retinoic Acid"/>
</dbReference>
<dbReference type="Reactome" id="R-RNO-6783984">
    <property type="pathway name" value="Glycine degradation"/>
</dbReference>
<dbReference type="Reactome" id="R-RNO-70895">
    <property type="pathway name" value="Branched-chain amino acid catabolism"/>
</dbReference>
<dbReference type="Reactome" id="R-RNO-9837999">
    <property type="pathway name" value="Mitochondrial protein degradation"/>
</dbReference>
<dbReference type="Reactome" id="R-RNO-9853506">
    <property type="pathway name" value="OGDH complex synthesizes succinyl-CoA from 2-OG"/>
</dbReference>
<dbReference type="Reactome" id="R-RNO-9858328">
    <property type="pathway name" value="OADH complex synthesizes glutaryl-CoA from 2-OA"/>
</dbReference>
<dbReference type="Reactome" id="R-RNO-9859138">
    <property type="pathway name" value="BCKDH synthesizes BCAA-CoA from KIC, KMVA, KIV"/>
</dbReference>
<dbReference type="Reactome" id="R-RNO-9861559">
    <property type="pathway name" value="PDH complex synthesizes acetyl-CoA from PYR"/>
</dbReference>
<dbReference type="SABIO-RK" id="Q6P6R2"/>
<dbReference type="PRO" id="PR:Q6P6R2"/>
<dbReference type="Proteomes" id="UP000002494">
    <property type="component" value="Chromosome 6"/>
</dbReference>
<dbReference type="Bgee" id="ENSRNOG00000006364">
    <property type="expression patterns" value="Expressed in heart and 20 other cell types or tissues"/>
</dbReference>
<dbReference type="GO" id="GO:1902493">
    <property type="term" value="C:acetyltransferase complex"/>
    <property type="evidence" value="ECO:0000266"/>
    <property type="project" value="RGD"/>
</dbReference>
<dbReference type="GO" id="GO:0043159">
    <property type="term" value="C:acrosomal matrix"/>
    <property type="evidence" value="ECO:0000266"/>
    <property type="project" value="RGD"/>
</dbReference>
<dbReference type="GO" id="GO:0160157">
    <property type="term" value="C:branched-chain alpha-ketoacid dehydrogenase complex"/>
    <property type="evidence" value="ECO:0000266"/>
    <property type="project" value="RGD"/>
</dbReference>
<dbReference type="GO" id="GO:0005929">
    <property type="term" value="C:cilium"/>
    <property type="evidence" value="ECO:0000266"/>
    <property type="project" value="RGD"/>
</dbReference>
<dbReference type="GO" id="GO:0005759">
    <property type="term" value="C:mitochondrial matrix"/>
    <property type="evidence" value="ECO:0000266"/>
    <property type="project" value="RGD"/>
</dbReference>
<dbReference type="GO" id="GO:0005739">
    <property type="term" value="C:mitochondrion"/>
    <property type="evidence" value="ECO:0000266"/>
    <property type="project" value="RGD"/>
</dbReference>
<dbReference type="GO" id="GO:0031514">
    <property type="term" value="C:motile cilium"/>
    <property type="evidence" value="ECO:0007669"/>
    <property type="project" value="UniProtKB-SubCell"/>
</dbReference>
<dbReference type="GO" id="GO:0005634">
    <property type="term" value="C:nucleus"/>
    <property type="evidence" value="ECO:0000250"/>
    <property type="project" value="UniProtKB"/>
</dbReference>
<dbReference type="GO" id="GO:0160167">
    <property type="term" value="C:oxoadipate dehydrogenase complex"/>
    <property type="evidence" value="ECO:0000266"/>
    <property type="project" value="RGD"/>
</dbReference>
<dbReference type="GO" id="GO:0045252">
    <property type="term" value="C:oxoglutarate dehydrogenase complex"/>
    <property type="evidence" value="ECO:0000314"/>
    <property type="project" value="RGD"/>
</dbReference>
<dbReference type="GO" id="GO:0045254">
    <property type="term" value="C:pyruvate dehydrogenase complex"/>
    <property type="evidence" value="ECO:0000314"/>
    <property type="project" value="RGD"/>
</dbReference>
<dbReference type="GO" id="GO:0004148">
    <property type="term" value="F:dihydrolipoyl dehydrogenase (NADH) activity"/>
    <property type="evidence" value="ECO:0000314"/>
    <property type="project" value="RGD"/>
</dbReference>
<dbReference type="GO" id="GO:0050660">
    <property type="term" value="F:flavin adenine dinucleotide binding"/>
    <property type="evidence" value="ECO:0000314"/>
    <property type="project" value="RGD"/>
</dbReference>
<dbReference type="GO" id="GO:0043544">
    <property type="term" value="F:lipoamide binding"/>
    <property type="evidence" value="ECO:0000314"/>
    <property type="project" value="RGD"/>
</dbReference>
<dbReference type="GO" id="GO:0051287">
    <property type="term" value="F:NAD binding"/>
    <property type="evidence" value="ECO:0000314"/>
    <property type="project" value="RGD"/>
</dbReference>
<dbReference type="GO" id="GO:0006103">
    <property type="term" value="P:2-oxoglutarate metabolic process"/>
    <property type="evidence" value="ECO:0000314"/>
    <property type="project" value="RGD"/>
</dbReference>
<dbReference type="GO" id="GO:0009083">
    <property type="term" value="P:branched-chain amino acid catabolic process"/>
    <property type="evidence" value="ECO:0000266"/>
    <property type="project" value="RGD"/>
</dbReference>
<dbReference type="GO" id="GO:0051068">
    <property type="term" value="P:dihydrolipoamide metabolic process"/>
    <property type="evidence" value="ECO:0000314"/>
    <property type="project" value="RGD"/>
</dbReference>
<dbReference type="GO" id="GO:0007369">
    <property type="term" value="P:gastrulation"/>
    <property type="evidence" value="ECO:0000266"/>
    <property type="project" value="RGD"/>
</dbReference>
<dbReference type="GO" id="GO:0009106">
    <property type="term" value="P:lipoate metabolic process"/>
    <property type="evidence" value="ECO:0000314"/>
    <property type="project" value="RGD"/>
</dbReference>
<dbReference type="GO" id="GO:0006120">
    <property type="term" value="P:mitochondrial electron transport, NADH to ubiquinone"/>
    <property type="evidence" value="ECO:0000266"/>
    <property type="project" value="RGD"/>
</dbReference>
<dbReference type="GO" id="GO:0006508">
    <property type="term" value="P:proteolysis"/>
    <property type="evidence" value="ECO:0000266"/>
    <property type="project" value="RGD"/>
</dbReference>
<dbReference type="GO" id="GO:0006086">
    <property type="term" value="P:pyruvate decarboxylation to acetyl-CoA"/>
    <property type="evidence" value="ECO:0000314"/>
    <property type="project" value="RGD"/>
</dbReference>
<dbReference type="GO" id="GO:0006090">
    <property type="term" value="P:pyruvate metabolic process"/>
    <property type="evidence" value="ECO:0000318"/>
    <property type="project" value="GO_Central"/>
</dbReference>
<dbReference type="GO" id="GO:0042391">
    <property type="term" value="P:regulation of membrane potential"/>
    <property type="evidence" value="ECO:0000266"/>
    <property type="project" value="RGD"/>
</dbReference>
<dbReference type="GO" id="GO:0048240">
    <property type="term" value="P:sperm capacitation"/>
    <property type="evidence" value="ECO:0000266"/>
    <property type="project" value="RGD"/>
</dbReference>
<dbReference type="FunFam" id="3.30.390.30:FF:000001">
    <property type="entry name" value="Dihydrolipoyl dehydrogenase"/>
    <property type="match status" value="1"/>
</dbReference>
<dbReference type="FunFam" id="3.50.50.60:FF:000025">
    <property type="entry name" value="Dihydrolipoyl dehydrogenase"/>
    <property type="match status" value="1"/>
</dbReference>
<dbReference type="FunFam" id="3.50.50.60:FF:000221">
    <property type="entry name" value="Dihydrolipoyl dehydrogenase, mitochondrial"/>
    <property type="match status" value="1"/>
</dbReference>
<dbReference type="Gene3D" id="3.30.390.30">
    <property type="match status" value="1"/>
</dbReference>
<dbReference type="Gene3D" id="3.50.50.60">
    <property type="entry name" value="FAD/NAD(P)-binding domain"/>
    <property type="match status" value="2"/>
</dbReference>
<dbReference type="InterPro" id="IPR050151">
    <property type="entry name" value="Class-I_Pyr_Nuc-Dis_Oxidored"/>
</dbReference>
<dbReference type="InterPro" id="IPR036188">
    <property type="entry name" value="FAD/NAD-bd_sf"/>
</dbReference>
<dbReference type="InterPro" id="IPR023753">
    <property type="entry name" value="FAD/NAD-binding_dom"/>
</dbReference>
<dbReference type="InterPro" id="IPR016156">
    <property type="entry name" value="FAD/NAD-linked_Rdtase_dimer_sf"/>
</dbReference>
<dbReference type="InterPro" id="IPR006258">
    <property type="entry name" value="Lipoamide_DH"/>
</dbReference>
<dbReference type="InterPro" id="IPR001100">
    <property type="entry name" value="Pyr_nuc-diS_OxRdtase"/>
</dbReference>
<dbReference type="InterPro" id="IPR004099">
    <property type="entry name" value="Pyr_nucl-diS_OxRdtase_dimer"/>
</dbReference>
<dbReference type="InterPro" id="IPR012999">
    <property type="entry name" value="Pyr_OxRdtase_I_AS"/>
</dbReference>
<dbReference type="NCBIfam" id="TIGR01350">
    <property type="entry name" value="lipoamide_DH"/>
    <property type="match status" value="1"/>
</dbReference>
<dbReference type="PANTHER" id="PTHR22912:SF151">
    <property type="entry name" value="DIHYDROLIPOYL DEHYDROGENASE, MITOCHONDRIAL"/>
    <property type="match status" value="1"/>
</dbReference>
<dbReference type="PANTHER" id="PTHR22912">
    <property type="entry name" value="DISULFIDE OXIDOREDUCTASE"/>
    <property type="match status" value="1"/>
</dbReference>
<dbReference type="Pfam" id="PF07992">
    <property type="entry name" value="Pyr_redox_2"/>
    <property type="match status" value="1"/>
</dbReference>
<dbReference type="Pfam" id="PF02852">
    <property type="entry name" value="Pyr_redox_dim"/>
    <property type="match status" value="1"/>
</dbReference>
<dbReference type="PIRSF" id="PIRSF000350">
    <property type="entry name" value="Mercury_reductase_MerA"/>
    <property type="match status" value="1"/>
</dbReference>
<dbReference type="PRINTS" id="PR00368">
    <property type="entry name" value="FADPNR"/>
</dbReference>
<dbReference type="PRINTS" id="PR00411">
    <property type="entry name" value="PNDRDTASEI"/>
</dbReference>
<dbReference type="SUPFAM" id="SSF51905">
    <property type="entry name" value="FAD/NAD(P)-binding domain"/>
    <property type="match status" value="1"/>
</dbReference>
<dbReference type="SUPFAM" id="SSF55424">
    <property type="entry name" value="FAD/NAD-linked reductases, dimerisation (C-terminal) domain"/>
    <property type="match status" value="1"/>
</dbReference>
<dbReference type="PROSITE" id="PS00076">
    <property type="entry name" value="PYRIDINE_REDOX_1"/>
    <property type="match status" value="1"/>
</dbReference>
<organism>
    <name type="scientific">Rattus norvegicus</name>
    <name type="common">Rat</name>
    <dbReference type="NCBI Taxonomy" id="10116"/>
    <lineage>
        <taxon>Eukaryota</taxon>
        <taxon>Metazoa</taxon>
        <taxon>Chordata</taxon>
        <taxon>Craniata</taxon>
        <taxon>Vertebrata</taxon>
        <taxon>Euteleostomi</taxon>
        <taxon>Mammalia</taxon>
        <taxon>Eutheria</taxon>
        <taxon>Euarchontoglires</taxon>
        <taxon>Glires</taxon>
        <taxon>Rodentia</taxon>
        <taxon>Myomorpha</taxon>
        <taxon>Muroidea</taxon>
        <taxon>Muridae</taxon>
        <taxon>Murinae</taxon>
        <taxon>Rattus</taxon>
    </lineage>
</organism>
<gene>
    <name type="primary">Dld</name>
</gene>
<name>DLDH_RAT</name>
<evidence type="ECO:0000250" key="1"/>
<evidence type="ECO:0000250" key="2">
    <source>
        <dbReference type="UniProtKB" id="O08749"/>
    </source>
</evidence>
<evidence type="ECO:0000250" key="3">
    <source>
        <dbReference type="UniProtKB" id="P09622"/>
    </source>
</evidence>
<evidence type="ECO:0000250" key="4">
    <source>
        <dbReference type="UniProtKB" id="P09624"/>
    </source>
</evidence>
<evidence type="ECO:0000250" key="5">
    <source>
        <dbReference type="UniProtKB" id="Q811C4"/>
    </source>
</evidence>
<evidence type="ECO:0000305" key="6"/>
<evidence type="ECO:0007744" key="7">
    <source>
    </source>
</evidence>
<accession>Q6P6R2</accession>
<protein>
    <recommendedName>
        <fullName>Dihydrolipoyl dehydrogenase, mitochondrial</fullName>
        <ecNumber evidence="3">1.8.1.4</ecNumber>
    </recommendedName>
    <alternativeName>
        <fullName>Dihydrolipoamide dehydrogenase</fullName>
    </alternativeName>
</protein>
<keyword id="KW-0007">Acetylation</keyword>
<keyword id="KW-0966">Cell projection</keyword>
<keyword id="KW-0969">Cilium</keyword>
<keyword id="KW-0968">Cytoplasmic vesicle</keyword>
<keyword id="KW-0903">Direct protein sequencing</keyword>
<keyword id="KW-1015">Disulfide bond</keyword>
<keyword id="KW-0274">FAD</keyword>
<keyword id="KW-0282">Flagellum</keyword>
<keyword id="KW-0285">Flavoprotein</keyword>
<keyword id="KW-0496">Mitochondrion</keyword>
<keyword id="KW-0520">NAD</keyword>
<keyword id="KW-0539">Nucleus</keyword>
<keyword id="KW-0560">Oxidoreductase</keyword>
<keyword id="KW-0597">Phosphoprotein</keyword>
<keyword id="KW-0676">Redox-active center</keyword>
<keyword id="KW-1185">Reference proteome</keyword>
<keyword id="KW-0809">Transit peptide</keyword>
<proteinExistence type="evidence at protein level"/>
<reference key="1">
    <citation type="journal article" date="2004" name="Genome Res.">
        <title>The status, quality, and expansion of the NIH full-length cDNA project: the Mammalian Gene Collection (MGC).</title>
        <authorList>
            <consortium name="The MGC Project Team"/>
        </authorList>
    </citation>
    <scope>NUCLEOTIDE SEQUENCE [LARGE SCALE MRNA]</scope>
    <source>
        <tissue>Prostate</tissue>
    </source>
</reference>
<reference key="2">
    <citation type="submission" date="2007-07" db="UniProtKB">
        <authorList>
            <person name="Lubec G."/>
            <person name="Afjehi-Sadat L."/>
            <person name="Kang S.U."/>
        </authorList>
    </citation>
    <scope>PROTEIN SEQUENCE OF 90-104; 289-334; 431-440 AND 483-495</scope>
    <scope>IDENTIFICATION BY MASS SPECTROMETRY</scope>
    <source>
        <strain>Sprague-Dawley</strain>
        <tissue>Brain</tissue>
        <tissue>Spinal cord</tissue>
    </source>
</reference>
<reference key="3">
    <citation type="journal article" date="2012" name="Nat. Commun.">
        <title>Quantitative maps of protein phosphorylation sites across 14 different rat organs and tissues.</title>
        <authorList>
            <person name="Lundby A."/>
            <person name="Secher A."/>
            <person name="Lage K."/>
            <person name="Nordsborg N.B."/>
            <person name="Dmytriyev A."/>
            <person name="Lundby C."/>
            <person name="Olsen J.V."/>
        </authorList>
    </citation>
    <scope>PHOSPHORYLATION [LARGE SCALE ANALYSIS] AT SER-297</scope>
    <scope>IDENTIFICATION BY MASS SPECTROMETRY [LARGE SCALE ANALYSIS]</scope>
</reference>
<feature type="transit peptide" description="Mitochondrion" evidence="1">
    <location>
        <begin position="1"/>
        <end position="35"/>
    </location>
</feature>
<feature type="chain" id="PRO_0000260228" description="Dihydrolipoyl dehydrogenase, mitochondrial">
    <location>
        <begin position="36"/>
        <end position="509"/>
    </location>
</feature>
<feature type="active site" description="Proton acceptor" evidence="4">
    <location>
        <position position="487"/>
    </location>
</feature>
<feature type="binding site" evidence="3">
    <location>
        <begin position="71"/>
        <end position="80"/>
    </location>
    <ligand>
        <name>FAD</name>
        <dbReference type="ChEBI" id="CHEBI:57692"/>
    </ligand>
</feature>
<feature type="binding site" evidence="3">
    <location>
        <position position="89"/>
    </location>
    <ligand>
        <name>FAD</name>
        <dbReference type="ChEBI" id="CHEBI:57692"/>
    </ligand>
</feature>
<feature type="binding site" evidence="3">
    <location>
        <position position="154"/>
    </location>
    <ligand>
        <name>FAD</name>
        <dbReference type="ChEBI" id="CHEBI:57692"/>
    </ligand>
</feature>
<feature type="binding site" evidence="3">
    <location>
        <begin position="183"/>
        <end position="185"/>
    </location>
    <ligand>
        <name>FAD</name>
        <dbReference type="ChEBI" id="CHEBI:57692"/>
    </ligand>
</feature>
<feature type="binding site" evidence="3">
    <location>
        <begin position="220"/>
        <end position="227"/>
    </location>
    <ligand>
        <name>NAD(+)</name>
        <dbReference type="ChEBI" id="CHEBI:57540"/>
    </ligand>
</feature>
<feature type="binding site" evidence="3">
    <location>
        <position position="243"/>
    </location>
    <ligand>
        <name>NAD(+)</name>
        <dbReference type="ChEBI" id="CHEBI:57540"/>
    </ligand>
</feature>
<feature type="binding site" evidence="3">
    <location>
        <position position="278"/>
    </location>
    <ligand>
        <name>NAD(+)</name>
        <dbReference type="ChEBI" id="CHEBI:57540"/>
    </ligand>
</feature>
<feature type="binding site" evidence="3">
    <location>
        <position position="314"/>
    </location>
    <ligand>
        <name>NAD(+)</name>
        <dbReference type="ChEBI" id="CHEBI:57540"/>
    </ligand>
</feature>
<feature type="binding site" evidence="3">
    <location>
        <position position="355"/>
    </location>
    <ligand>
        <name>FAD</name>
        <dbReference type="ChEBI" id="CHEBI:57692"/>
    </ligand>
</feature>
<feature type="binding site" evidence="3">
    <location>
        <begin position="361"/>
        <end position="364"/>
    </location>
    <ligand>
        <name>FAD</name>
        <dbReference type="ChEBI" id="CHEBI:57692"/>
    </ligand>
</feature>
<feature type="site" description="Important for interaction with PDHX and activity of pyruvate dehydrogenase complex" evidence="3">
    <location>
        <position position="448"/>
    </location>
</feature>
<feature type="site" description="Important for interaction with PDHX and activity of pyruvate dehydrogenase complex" evidence="3">
    <location>
        <position position="473"/>
    </location>
</feature>
<feature type="modified residue" description="N6-acetyllysine; alternate" evidence="2">
    <location>
        <position position="66"/>
    </location>
</feature>
<feature type="modified residue" description="N6-succinyllysine; alternate" evidence="2">
    <location>
        <position position="66"/>
    </location>
</feature>
<feature type="modified residue" description="N6-acetyllysine; alternate" evidence="2">
    <location>
        <position position="104"/>
    </location>
</feature>
<feature type="modified residue" description="N6-succinyllysine; alternate" evidence="2">
    <location>
        <position position="104"/>
    </location>
</feature>
<feature type="modified residue" description="N6-acetyllysine; alternate" evidence="2">
    <location>
        <position position="122"/>
    </location>
</feature>
<feature type="modified residue" description="N6-succinyllysine; alternate" evidence="2">
    <location>
        <position position="122"/>
    </location>
</feature>
<feature type="modified residue" description="N6-acetyllysine; alternate" evidence="2">
    <location>
        <position position="132"/>
    </location>
</feature>
<feature type="modified residue" description="N6-succinyllysine; alternate" evidence="2">
    <location>
        <position position="132"/>
    </location>
</feature>
<feature type="modified residue" description="N6-acetyllysine; alternate" evidence="3">
    <location>
        <position position="143"/>
    </location>
</feature>
<feature type="modified residue" description="N6-succinyllysine; alternate" evidence="2">
    <location>
        <position position="143"/>
    </location>
</feature>
<feature type="modified residue" description="N6-succinyllysine" evidence="2">
    <location>
        <position position="159"/>
    </location>
</feature>
<feature type="modified residue" description="N6-succinyllysine" evidence="2">
    <location>
        <position position="273"/>
    </location>
</feature>
<feature type="modified residue" description="N6-succinyllysine" evidence="2">
    <location>
        <position position="277"/>
    </location>
</feature>
<feature type="modified residue" description="Phosphoserine" evidence="2">
    <location>
        <position position="285"/>
    </location>
</feature>
<feature type="modified residue" description="Phosphoserine" evidence="7">
    <location>
        <position position="297"/>
    </location>
</feature>
<feature type="modified residue" description="N6-acetyllysine" evidence="2">
    <location>
        <position position="346"/>
    </location>
</feature>
<feature type="modified residue" description="N6-acetyllysine; alternate" evidence="3">
    <location>
        <position position="410"/>
    </location>
</feature>
<feature type="modified residue" description="N6-succinyllysine; alternate" evidence="2">
    <location>
        <position position="410"/>
    </location>
</feature>
<feature type="modified residue" description="N6-acetyllysine" evidence="3">
    <location>
        <position position="417"/>
    </location>
</feature>
<feature type="modified residue" description="N6-acetyllysine" evidence="2">
    <location>
        <position position="420"/>
    </location>
</feature>
<feature type="modified residue" description="N6-succinyllysine" evidence="2">
    <location>
        <position position="430"/>
    </location>
</feature>
<feature type="modified residue" description="Phosphoserine" evidence="3">
    <location>
        <position position="502"/>
    </location>
</feature>
<feature type="modified residue" description="N6-acetyllysine; alternate" evidence="2">
    <location>
        <position position="505"/>
    </location>
</feature>
<feature type="modified residue" description="N6-succinyllysine; alternate" evidence="2">
    <location>
        <position position="505"/>
    </location>
</feature>
<feature type="disulfide bond" description="Redox-active" evidence="4">
    <location>
        <begin position="80"/>
        <end position="85"/>
    </location>
</feature>
<comment type="function">
    <text evidence="3 5">Lipoamide dehydrogenase is a component of the glycine cleavage system as well as an E3 component of three alpha-ketoacid dehydrogenase complexes (pyruvate-, alpha-ketoglutarate-, and branched-chain amino acid-dehydrogenase complex). The 2-oxoglutarate dehydrogenase complex is mainly active in the mitochondrion. A fraction of the 2-oxoglutarate dehydrogenase complex also localizes in the nucleus and is required for lysine succinylation of histones: associates with KAT2A on chromatin and provides succinyl-CoA to histone succinyltransferase KAT2A. In monomeric form may have additional moonlighting function as serine protease (By similarity). Involved in the hyperactivation of spermatazoa during capacitation and in the spermatazoal acrosome reaction (By similarity).</text>
</comment>
<comment type="catalytic activity">
    <reaction evidence="3">
        <text>N(6)-[(R)-dihydrolipoyl]-L-lysyl-[protein] + NAD(+) = N(6)-[(R)-lipoyl]-L-lysyl-[protein] + NADH + H(+)</text>
        <dbReference type="Rhea" id="RHEA:15045"/>
        <dbReference type="Rhea" id="RHEA-COMP:10474"/>
        <dbReference type="Rhea" id="RHEA-COMP:10475"/>
        <dbReference type="ChEBI" id="CHEBI:15378"/>
        <dbReference type="ChEBI" id="CHEBI:57540"/>
        <dbReference type="ChEBI" id="CHEBI:57945"/>
        <dbReference type="ChEBI" id="CHEBI:83099"/>
        <dbReference type="ChEBI" id="CHEBI:83100"/>
        <dbReference type="EC" id="1.8.1.4"/>
    </reaction>
</comment>
<comment type="cofactor">
    <cofactor evidence="3">
        <name>FAD</name>
        <dbReference type="ChEBI" id="CHEBI:57692"/>
    </cofactor>
    <text evidence="3">Binds 1 FAD per subunit.</text>
</comment>
<comment type="subunit">
    <text evidence="2 3">Homodimer. Part of the multimeric pyruvate dehydrogenase complex that contains multiple copies of pyruvate dehydrogenase (subunits PDHA (PDHA1 or PDHA2) and PDHB, E1), dihydrolipoamide acetyltransferase (DLAT, E2) and lipoamide dehydrogenase (DLD, E3). These subunits are bound to an inner core composed of about 48 DLAT and 12 PDHX molecules (by non covalent bonds). The 2-oxoglutarate dehydrogenase complex is composed of OGDH (2-oxoglutarate dehydrogenase; E1), DLST (dihydrolipoamide succinyltransferase; E2), DLD (dihydrolipoamide dehydrogenase; E3) and the assembly factor KGD4 (By similarity). It contains multiple copies of the three enzymatic components (E1, E2 and E3). In the nucleus, the 2-oxoglutarate dehydrogenase complex associates with KAT2A. Interacts with PDHX.</text>
</comment>
<comment type="subcellular location">
    <subcellularLocation>
        <location evidence="3">Mitochondrion matrix</location>
    </subcellularLocation>
    <subcellularLocation>
        <location evidence="3">Nucleus</location>
    </subcellularLocation>
    <subcellularLocation>
        <location evidence="5">Cell projection</location>
        <location evidence="5">Cilium</location>
        <location evidence="5">Flagellum</location>
    </subcellularLocation>
    <subcellularLocation>
        <location evidence="3">Cytoplasmic vesicle</location>
        <location evidence="3">Secretory vesicle</location>
        <location evidence="3">Acrosome</location>
    </subcellularLocation>
    <text evidence="3">Mainly localizes in the mitochondrion. A small fraction localizes to the nucleus, where the 2-oxoglutarate dehydrogenase complex is required for histone succinylation.</text>
</comment>
<comment type="PTM">
    <text evidence="5">Tyrosine phosphorylated.</text>
</comment>
<comment type="miscellaneous">
    <text evidence="4">The active site is a redox-active disulfide bond.</text>
</comment>
<comment type="similarity">
    <text evidence="6">Belongs to the class-I pyridine nucleotide-disulfide oxidoreductase family.</text>
</comment>
<sequence length="509" mass="54038">MQSWSRVYCSLAKKGHFNRLSHGLQGASSVPLRTYSDQPIDADVTVIGSGPGGYVAAIKAAQLGFKTVCIEKNETLGGTCLNVGCIPSKALLNNSHYYHLAHGKDFASRGIEIPEVRLNLEKMMEQKRSAVKALTGGIAHLFKQNKVVHVNGFGKITGKNQVTATTADGSTQVIGTKNILIATGSEVTPFPGITIDEDTIVSSTGALSLKKVPEKLVVIGAGVIGVELGSVWQRLGADVTAVEFLGHVGGIGIDMEISKNFQRILQKQGFKFKLNTKVTGATKKSDGKIDVSVEAASGGKAEVITCDVLLVCIGRRPFTQNLGLEELGIELDPKGRIPVNTRFQTKIPNIFAIGDVVAGPMLAHKAEDEGIICVEGMAGGAVHIDYNCVPSVIYTHPEVAWVGKSEEQLKEEGVEFKVGKFPFAANSRAKTNADTDGMVKILGHKSTDRILGAHILGPGAGEMVNEAALALEYGASCEDVARVCHAHPTLSEAFREANLAASFGKPINF</sequence>